<reference key="1">
    <citation type="journal article" date="2007" name="Proc. Natl. Acad. Sci. U.S.A.">
        <title>Genome and proteome of long-chain alkane degrading Geobacillus thermodenitrificans NG80-2 isolated from a deep-subsurface oil reservoir.</title>
        <authorList>
            <person name="Feng L."/>
            <person name="Wang W."/>
            <person name="Cheng J."/>
            <person name="Ren Y."/>
            <person name="Zhao G."/>
            <person name="Gao C."/>
            <person name="Tang Y."/>
            <person name="Liu X."/>
            <person name="Han W."/>
            <person name="Peng X."/>
            <person name="Liu R."/>
            <person name="Wang L."/>
        </authorList>
    </citation>
    <scope>NUCLEOTIDE SEQUENCE [LARGE SCALE GENOMIC DNA]</scope>
    <source>
        <strain>NG80-2</strain>
    </source>
</reference>
<comment type="function">
    <text evidence="1">Involved in the glycolate utilization. Catalyzes the condensation and subsequent hydrolysis of acetyl-coenzyme A (acetyl-CoA) and glyoxylate to form malate and CoA.</text>
</comment>
<comment type="catalytic activity">
    <reaction evidence="1">
        <text>glyoxylate + acetyl-CoA + H2O = (S)-malate + CoA + H(+)</text>
        <dbReference type="Rhea" id="RHEA:18181"/>
        <dbReference type="ChEBI" id="CHEBI:15377"/>
        <dbReference type="ChEBI" id="CHEBI:15378"/>
        <dbReference type="ChEBI" id="CHEBI:15589"/>
        <dbReference type="ChEBI" id="CHEBI:36655"/>
        <dbReference type="ChEBI" id="CHEBI:57287"/>
        <dbReference type="ChEBI" id="CHEBI:57288"/>
        <dbReference type="EC" id="2.3.3.9"/>
    </reaction>
</comment>
<comment type="cofactor">
    <cofactor evidence="1">
        <name>Mg(2+)</name>
        <dbReference type="ChEBI" id="CHEBI:18420"/>
    </cofactor>
</comment>
<comment type="pathway">
    <text evidence="1">Carbohydrate metabolism; glyoxylate cycle; (S)-malate from isocitrate: step 2/2.</text>
</comment>
<comment type="subunit">
    <text evidence="1">Monomer.</text>
</comment>
<comment type="subcellular location">
    <subcellularLocation>
        <location evidence="1">Cytoplasm</location>
    </subcellularLocation>
</comment>
<comment type="similarity">
    <text evidence="1">Belongs to the malate synthase family. GlcB subfamily.</text>
</comment>
<proteinExistence type="inferred from homology"/>
<gene>
    <name evidence="1" type="primary">glcB</name>
    <name type="ordered locus">GTNG_1384</name>
</gene>
<dbReference type="EC" id="2.3.3.9" evidence="1"/>
<dbReference type="EMBL" id="CP000557">
    <property type="protein sequence ID" value="ABO66754.1"/>
    <property type="molecule type" value="Genomic_DNA"/>
</dbReference>
<dbReference type="RefSeq" id="WP_008879330.1">
    <property type="nucleotide sequence ID" value="NC_009328.1"/>
</dbReference>
<dbReference type="SMR" id="A4IN50"/>
<dbReference type="KEGG" id="gtn:GTNG_1384"/>
<dbReference type="eggNOG" id="COG2225">
    <property type="taxonomic scope" value="Bacteria"/>
</dbReference>
<dbReference type="HOGENOM" id="CLU_028446_1_0_9"/>
<dbReference type="UniPathway" id="UPA00703">
    <property type="reaction ID" value="UER00720"/>
</dbReference>
<dbReference type="Proteomes" id="UP000001578">
    <property type="component" value="Chromosome"/>
</dbReference>
<dbReference type="GO" id="GO:0005829">
    <property type="term" value="C:cytosol"/>
    <property type="evidence" value="ECO:0007669"/>
    <property type="project" value="TreeGrafter"/>
</dbReference>
<dbReference type="GO" id="GO:0000287">
    <property type="term" value="F:magnesium ion binding"/>
    <property type="evidence" value="ECO:0007669"/>
    <property type="project" value="TreeGrafter"/>
</dbReference>
<dbReference type="GO" id="GO:0004474">
    <property type="term" value="F:malate synthase activity"/>
    <property type="evidence" value="ECO:0007669"/>
    <property type="project" value="UniProtKB-UniRule"/>
</dbReference>
<dbReference type="GO" id="GO:0009436">
    <property type="term" value="P:glyoxylate catabolic process"/>
    <property type="evidence" value="ECO:0007669"/>
    <property type="project" value="TreeGrafter"/>
</dbReference>
<dbReference type="GO" id="GO:0006097">
    <property type="term" value="P:glyoxylate cycle"/>
    <property type="evidence" value="ECO:0007669"/>
    <property type="project" value="UniProtKB-UniRule"/>
</dbReference>
<dbReference type="GO" id="GO:0006099">
    <property type="term" value="P:tricarboxylic acid cycle"/>
    <property type="evidence" value="ECO:0007669"/>
    <property type="project" value="UniProtKB-KW"/>
</dbReference>
<dbReference type="CDD" id="cd00728">
    <property type="entry name" value="malate_synt_G"/>
    <property type="match status" value="1"/>
</dbReference>
<dbReference type="FunFam" id="3.20.20.360:FF:000002">
    <property type="entry name" value="Malate synthase G"/>
    <property type="match status" value="1"/>
</dbReference>
<dbReference type="Gene3D" id="3.20.20.360">
    <property type="entry name" value="Malate synthase, domain 3"/>
    <property type="match status" value="2"/>
</dbReference>
<dbReference type="Gene3D" id="1.20.1220.12">
    <property type="entry name" value="Malate synthase, domain III"/>
    <property type="match status" value="1"/>
</dbReference>
<dbReference type="HAMAP" id="MF_00641">
    <property type="entry name" value="Malate_synth_G"/>
    <property type="match status" value="1"/>
</dbReference>
<dbReference type="InterPro" id="IPR044856">
    <property type="entry name" value="Malate_synth_C_sf"/>
</dbReference>
<dbReference type="InterPro" id="IPR011076">
    <property type="entry name" value="Malate_synth_sf"/>
</dbReference>
<dbReference type="InterPro" id="IPR001465">
    <property type="entry name" value="Malate_synthase_TIM"/>
</dbReference>
<dbReference type="InterPro" id="IPR006253">
    <property type="entry name" value="Malate_synthG"/>
</dbReference>
<dbReference type="InterPro" id="IPR048355">
    <property type="entry name" value="MS_C"/>
</dbReference>
<dbReference type="InterPro" id="IPR048356">
    <property type="entry name" value="MS_N"/>
</dbReference>
<dbReference type="InterPro" id="IPR046363">
    <property type="entry name" value="MS_N_TIM-barrel_dom"/>
</dbReference>
<dbReference type="InterPro" id="IPR048357">
    <property type="entry name" value="MSG_insertion"/>
</dbReference>
<dbReference type="NCBIfam" id="TIGR01345">
    <property type="entry name" value="malate_syn_G"/>
    <property type="match status" value="1"/>
</dbReference>
<dbReference type="NCBIfam" id="NF002825">
    <property type="entry name" value="PRK02999.1"/>
    <property type="match status" value="1"/>
</dbReference>
<dbReference type="PANTHER" id="PTHR42739">
    <property type="entry name" value="MALATE SYNTHASE G"/>
    <property type="match status" value="1"/>
</dbReference>
<dbReference type="PANTHER" id="PTHR42739:SF1">
    <property type="entry name" value="MALATE SYNTHASE G"/>
    <property type="match status" value="1"/>
</dbReference>
<dbReference type="Pfam" id="PF20659">
    <property type="entry name" value="MS_C"/>
    <property type="match status" value="1"/>
</dbReference>
<dbReference type="Pfam" id="PF20656">
    <property type="entry name" value="MS_N"/>
    <property type="match status" value="1"/>
</dbReference>
<dbReference type="Pfam" id="PF01274">
    <property type="entry name" value="MS_TIM-barrel"/>
    <property type="match status" value="1"/>
</dbReference>
<dbReference type="Pfam" id="PF20658">
    <property type="entry name" value="MSG_insertion"/>
    <property type="match status" value="1"/>
</dbReference>
<dbReference type="SUPFAM" id="SSF51645">
    <property type="entry name" value="Malate synthase G"/>
    <property type="match status" value="1"/>
</dbReference>
<organism>
    <name type="scientific">Geobacillus thermodenitrificans (strain NG80-2)</name>
    <dbReference type="NCBI Taxonomy" id="420246"/>
    <lineage>
        <taxon>Bacteria</taxon>
        <taxon>Bacillati</taxon>
        <taxon>Bacillota</taxon>
        <taxon>Bacilli</taxon>
        <taxon>Bacillales</taxon>
        <taxon>Anoxybacillaceae</taxon>
        <taxon>Geobacillus</taxon>
    </lineage>
</organism>
<protein>
    <recommendedName>
        <fullName evidence="1">Malate synthase G</fullName>
        <ecNumber evidence="1">2.3.3.9</ecNumber>
    </recommendedName>
</protein>
<keyword id="KW-0963">Cytoplasm</keyword>
<keyword id="KW-0329">Glyoxylate bypass</keyword>
<keyword id="KW-0460">Magnesium</keyword>
<keyword id="KW-0479">Metal-binding</keyword>
<keyword id="KW-0558">Oxidation</keyword>
<keyword id="KW-0808">Transferase</keyword>
<keyword id="KW-0816">Tricarboxylic acid cycle</keyword>
<sequence length="727" mass="81200">MIEYVQAGTIQVAKVLYEFVNEELLPNSGLDQDKFWSDFAALIADLTPRNKELLARRDEIQEKLNEWYKEHRGRFDFHEYKAFLTDIGYLEPEVEDFEITTDNVDEEIAVQAGPQLVVPLTNARYALNAANARWGSLYDALYGTDAISEEDGAERGSSYNPVRGAKVIAYGRQFLDEAVPLVEHSHKDAVQYAIVDGKLVVTTEGGATTGLKEPEKLIGFQGEPQNPTAVLLKNNGLHIEIQIDREHPVGKTDKAGIKDIVLEAAVTTIMDGEDSVAAVDAEDKVVVYRNLFGLIKGDLTATFEKNGKRLTRTLNPDREYKTPDGGELVLPGRSLMFVRNVGHLMTNNAILDANGEEVYEGIIDAVVTSLIMKHSLIGNTRYLNSRKGSIYIVKPKMHGSAEVAFANELFDRVEDMLGLERNTIKIGVMDEERRTSLNLKNCIYEVRDRIVFINTGFLDRTGDEIHTSMEAGPMRRKNDMKSSTWLAGYEKSNVAVGLAAGFRGRAQIGKGMWAMPDLMAEMLKQKGAQLKAGANTAWVPSPTAATLHALHYHQVNVAAVQNELANDRNDYRDDILQIPVVDNPQWTADEIQEELDNNCQSILGYVVRWIDQGIGCSKVPDIHNIGLMEDRATLRISSQILANWLHHGICTKEQVLETFKRMAKVVDEQNAGDPNYRPMAPNYDDSVAFQAACDLVFLGYEQPNGYTEPILHRRRQEAKAKFAAVQQ</sequence>
<evidence type="ECO:0000255" key="1">
    <source>
        <dbReference type="HAMAP-Rule" id="MF_00641"/>
    </source>
</evidence>
<accession>A4IN50</accession>
<feature type="chain" id="PRO_1000056903" description="Malate synthase G">
    <location>
        <begin position="1"/>
        <end position="727"/>
    </location>
</feature>
<feature type="active site" description="Proton acceptor" evidence="1">
    <location>
        <position position="339"/>
    </location>
</feature>
<feature type="active site" description="Proton donor" evidence="1">
    <location>
        <position position="630"/>
    </location>
</feature>
<feature type="binding site" evidence="1">
    <location>
        <position position="117"/>
    </location>
    <ligand>
        <name>acetyl-CoA</name>
        <dbReference type="ChEBI" id="CHEBI:57288"/>
    </ligand>
</feature>
<feature type="binding site" evidence="1">
    <location>
        <begin position="124"/>
        <end position="125"/>
    </location>
    <ligand>
        <name>acetyl-CoA</name>
        <dbReference type="ChEBI" id="CHEBI:57288"/>
    </ligand>
</feature>
<feature type="binding site" evidence="1">
    <location>
        <position position="275"/>
    </location>
    <ligand>
        <name>acetyl-CoA</name>
        <dbReference type="ChEBI" id="CHEBI:57288"/>
    </ligand>
</feature>
<feature type="binding site" evidence="1">
    <location>
        <position position="312"/>
    </location>
    <ligand>
        <name>acetyl-CoA</name>
        <dbReference type="ChEBI" id="CHEBI:57288"/>
    </ligand>
</feature>
<feature type="binding site" evidence="1">
    <location>
        <position position="339"/>
    </location>
    <ligand>
        <name>glyoxylate</name>
        <dbReference type="ChEBI" id="CHEBI:36655"/>
    </ligand>
</feature>
<feature type="binding site" evidence="1">
    <location>
        <position position="431"/>
    </location>
    <ligand>
        <name>glyoxylate</name>
        <dbReference type="ChEBI" id="CHEBI:36655"/>
    </ligand>
</feature>
<feature type="binding site" evidence="1">
    <location>
        <position position="431"/>
    </location>
    <ligand>
        <name>Mg(2+)</name>
        <dbReference type="ChEBI" id="CHEBI:18420"/>
    </ligand>
</feature>
<feature type="binding site" evidence="1">
    <location>
        <begin position="456"/>
        <end position="459"/>
    </location>
    <ligand>
        <name>glyoxylate</name>
        <dbReference type="ChEBI" id="CHEBI:36655"/>
    </ligand>
</feature>
<feature type="binding site" evidence="1">
    <location>
        <position position="459"/>
    </location>
    <ligand>
        <name>Mg(2+)</name>
        <dbReference type="ChEBI" id="CHEBI:18420"/>
    </ligand>
</feature>
<feature type="binding site" evidence="1">
    <location>
        <position position="540"/>
    </location>
    <ligand>
        <name>acetyl-CoA</name>
        <dbReference type="ChEBI" id="CHEBI:57288"/>
    </ligand>
</feature>
<feature type="modified residue" description="Cysteine sulfenic acid (-SOH)" evidence="1">
    <location>
        <position position="616"/>
    </location>
</feature>
<name>MASZ_GEOTN</name>